<evidence type="ECO:0000255" key="1">
    <source>
        <dbReference type="HAMAP-Rule" id="MF_00218"/>
    </source>
</evidence>
<comment type="function">
    <text evidence="1">Catalyzes the decarboxylation of four acetate groups of uroporphyrinogen-III to yield coproporphyrinogen-III.</text>
</comment>
<comment type="catalytic activity">
    <reaction evidence="1">
        <text>uroporphyrinogen III + 4 H(+) = coproporphyrinogen III + 4 CO2</text>
        <dbReference type="Rhea" id="RHEA:19865"/>
        <dbReference type="ChEBI" id="CHEBI:15378"/>
        <dbReference type="ChEBI" id="CHEBI:16526"/>
        <dbReference type="ChEBI" id="CHEBI:57308"/>
        <dbReference type="ChEBI" id="CHEBI:57309"/>
        <dbReference type="EC" id="4.1.1.37"/>
    </reaction>
</comment>
<comment type="pathway">
    <text evidence="1">Porphyrin-containing compound metabolism; protoporphyrin-IX biosynthesis; coproporphyrinogen-III from 5-aminolevulinate: step 4/4.</text>
</comment>
<comment type="subunit">
    <text evidence="1">Homodimer.</text>
</comment>
<comment type="subcellular location">
    <subcellularLocation>
        <location evidence="1">Cytoplasm</location>
    </subcellularLocation>
</comment>
<comment type="similarity">
    <text evidence="1">Belongs to the uroporphyrinogen decarboxylase family.</text>
</comment>
<gene>
    <name evidence="1" type="primary">hemE</name>
    <name type="ordered locus">lin2315</name>
</gene>
<organism>
    <name type="scientific">Listeria innocua serovar 6a (strain ATCC BAA-680 / CLIP 11262)</name>
    <dbReference type="NCBI Taxonomy" id="272626"/>
    <lineage>
        <taxon>Bacteria</taxon>
        <taxon>Bacillati</taxon>
        <taxon>Bacillota</taxon>
        <taxon>Bacilli</taxon>
        <taxon>Bacillales</taxon>
        <taxon>Listeriaceae</taxon>
        <taxon>Listeria</taxon>
    </lineage>
</organism>
<sequence>MTKITNDLFLKAARKEQVDRIPVWYMRQAGRSQPEYRKLKEKYSLFEITHQPEICAYVTKLPVDQYGVDAAILYKDIMTPLPGMGVDVEIKSGIGPVIHNPIRTFQDVEKLTIFKPEIEVPYVLDTIKLLADDMLDVPLIGFAGAPFTLASYMIEGGPSKNYHQTKSFMYREPEVWAILMEKLGRMTANYLIAQINAGASAVQLFDSWVGALSRADYAQYIRPVIEMIVKEVKAVHPTTPIIMQAVGASHLLAEWETMPLDVVGVDWRETITTARQKVPTKAIQGNLDPSTLLAPEKCIAETERILQEGILEPGYIFNLGHGVFPEVPPEMLKKLTKYIHERSEILLKKG</sequence>
<protein>
    <recommendedName>
        <fullName evidence="1">Uroporphyrinogen decarboxylase</fullName>
        <shortName evidence="1">UPD</shortName>
        <shortName evidence="1">URO-D</shortName>
        <ecNumber evidence="1">4.1.1.37</ecNumber>
    </recommendedName>
</protein>
<feature type="chain" id="PRO_0000187611" description="Uroporphyrinogen decarboxylase">
    <location>
        <begin position="1"/>
        <end position="350"/>
    </location>
</feature>
<feature type="binding site" evidence="1">
    <location>
        <begin position="27"/>
        <end position="31"/>
    </location>
    <ligand>
        <name>substrate</name>
    </ligand>
</feature>
<feature type="binding site" evidence="1">
    <location>
        <position position="46"/>
    </location>
    <ligand>
        <name>substrate</name>
    </ligand>
</feature>
<feature type="binding site" evidence="1">
    <location>
        <position position="76"/>
    </location>
    <ligand>
        <name>substrate</name>
    </ligand>
</feature>
<feature type="binding site" evidence="1">
    <location>
        <position position="152"/>
    </location>
    <ligand>
        <name>substrate</name>
    </ligand>
</feature>
<feature type="binding site" evidence="1">
    <location>
        <position position="207"/>
    </location>
    <ligand>
        <name>substrate</name>
    </ligand>
</feature>
<feature type="binding site" evidence="1">
    <location>
        <position position="321"/>
    </location>
    <ligand>
        <name>substrate</name>
    </ligand>
</feature>
<feature type="site" description="Transition state stabilizer" evidence="1">
    <location>
        <position position="76"/>
    </location>
</feature>
<proteinExistence type="inferred from homology"/>
<keyword id="KW-0963">Cytoplasm</keyword>
<keyword id="KW-0210">Decarboxylase</keyword>
<keyword id="KW-0456">Lyase</keyword>
<keyword id="KW-0627">Porphyrin biosynthesis</keyword>
<accession>Q929G1</accession>
<reference key="1">
    <citation type="journal article" date="2001" name="Science">
        <title>Comparative genomics of Listeria species.</title>
        <authorList>
            <person name="Glaser P."/>
            <person name="Frangeul L."/>
            <person name="Buchrieser C."/>
            <person name="Rusniok C."/>
            <person name="Amend A."/>
            <person name="Baquero F."/>
            <person name="Berche P."/>
            <person name="Bloecker H."/>
            <person name="Brandt P."/>
            <person name="Chakraborty T."/>
            <person name="Charbit A."/>
            <person name="Chetouani F."/>
            <person name="Couve E."/>
            <person name="de Daruvar A."/>
            <person name="Dehoux P."/>
            <person name="Domann E."/>
            <person name="Dominguez-Bernal G."/>
            <person name="Duchaud E."/>
            <person name="Durant L."/>
            <person name="Dussurget O."/>
            <person name="Entian K.-D."/>
            <person name="Fsihi H."/>
            <person name="Garcia-del Portillo F."/>
            <person name="Garrido P."/>
            <person name="Gautier L."/>
            <person name="Goebel W."/>
            <person name="Gomez-Lopez N."/>
            <person name="Hain T."/>
            <person name="Hauf J."/>
            <person name="Jackson D."/>
            <person name="Jones L.-M."/>
            <person name="Kaerst U."/>
            <person name="Kreft J."/>
            <person name="Kuhn M."/>
            <person name="Kunst F."/>
            <person name="Kurapkat G."/>
            <person name="Madueno E."/>
            <person name="Maitournam A."/>
            <person name="Mata Vicente J."/>
            <person name="Ng E."/>
            <person name="Nedjari H."/>
            <person name="Nordsiek G."/>
            <person name="Novella S."/>
            <person name="de Pablos B."/>
            <person name="Perez-Diaz J.-C."/>
            <person name="Purcell R."/>
            <person name="Remmel B."/>
            <person name="Rose M."/>
            <person name="Schlueter T."/>
            <person name="Simoes N."/>
            <person name="Tierrez A."/>
            <person name="Vazquez-Boland J.-A."/>
            <person name="Voss H."/>
            <person name="Wehland J."/>
            <person name="Cossart P."/>
        </authorList>
    </citation>
    <scope>NUCLEOTIDE SEQUENCE [LARGE SCALE GENOMIC DNA]</scope>
    <source>
        <strain>ATCC BAA-680 / CLIP 11262</strain>
    </source>
</reference>
<dbReference type="EC" id="4.1.1.37" evidence="1"/>
<dbReference type="EMBL" id="AL596171">
    <property type="protein sequence ID" value="CAC97543.1"/>
    <property type="molecule type" value="Genomic_DNA"/>
</dbReference>
<dbReference type="PIR" id="AG1721">
    <property type="entry name" value="AG1721"/>
</dbReference>
<dbReference type="RefSeq" id="WP_003769831.1">
    <property type="nucleotide sequence ID" value="NC_003212.1"/>
</dbReference>
<dbReference type="SMR" id="Q929G1"/>
<dbReference type="STRING" id="272626.gene:17566677"/>
<dbReference type="GeneID" id="93235660"/>
<dbReference type="KEGG" id="lin:hemE"/>
<dbReference type="eggNOG" id="COG0407">
    <property type="taxonomic scope" value="Bacteria"/>
</dbReference>
<dbReference type="HOGENOM" id="CLU_040933_0_1_9"/>
<dbReference type="OrthoDB" id="9806656at2"/>
<dbReference type="UniPathway" id="UPA00251">
    <property type="reaction ID" value="UER00321"/>
</dbReference>
<dbReference type="Proteomes" id="UP000002513">
    <property type="component" value="Chromosome"/>
</dbReference>
<dbReference type="GO" id="GO:0005829">
    <property type="term" value="C:cytosol"/>
    <property type="evidence" value="ECO:0007669"/>
    <property type="project" value="TreeGrafter"/>
</dbReference>
<dbReference type="GO" id="GO:0004853">
    <property type="term" value="F:uroporphyrinogen decarboxylase activity"/>
    <property type="evidence" value="ECO:0007669"/>
    <property type="project" value="UniProtKB-UniRule"/>
</dbReference>
<dbReference type="GO" id="GO:0006782">
    <property type="term" value="P:protoporphyrinogen IX biosynthetic process"/>
    <property type="evidence" value="ECO:0007669"/>
    <property type="project" value="UniProtKB-UniRule"/>
</dbReference>
<dbReference type="CDD" id="cd00717">
    <property type="entry name" value="URO-D"/>
    <property type="match status" value="1"/>
</dbReference>
<dbReference type="FunFam" id="3.20.20.210:FF:000005">
    <property type="entry name" value="Uroporphyrinogen decarboxylase"/>
    <property type="match status" value="1"/>
</dbReference>
<dbReference type="Gene3D" id="3.20.20.210">
    <property type="match status" value="1"/>
</dbReference>
<dbReference type="HAMAP" id="MF_00218">
    <property type="entry name" value="URO_D"/>
    <property type="match status" value="1"/>
</dbReference>
<dbReference type="InterPro" id="IPR038071">
    <property type="entry name" value="UROD/MetE-like_sf"/>
</dbReference>
<dbReference type="InterPro" id="IPR006361">
    <property type="entry name" value="Uroporphyrinogen_deCO2ase_HemE"/>
</dbReference>
<dbReference type="InterPro" id="IPR000257">
    <property type="entry name" value="Uroporphyrinogen_deCOase"/>
</dbReference>
<dbReference type="NCBIfam" id="TIGR01464">
    <property type="entry name" value="hemE"/>
    <property type="match status" value="1"/>
</dbReference>
<dbReference type="PANTHER" id="PTHR21091">
    <property type="entry name" value="METHYLTETRAHYDROFOLATE:HOMOCYSTEINE METHYLTRANSFERASE RELATED"/>
    <property type="match status" value="1"/>
</dbReference>
<dbReference type="PANTHER" id="PTHR21091:SF169">
    <property type="entry name" value="UROPORPHYRINOGEN DECARBOXYLASE"/>
    <property type="match status" value="1"/>
</dbReference>
<dbReference type="Pfam" id="PF01208">
    <property type="entry name" value="URO-D"/>
    <property type="match status" value="1"/>
</dbReference>
<dbReference type="SUPFAM" id="SSF51726">
    <property type="entry name" value="UROD/MetE-like"/>
    <property type="match status" value="1"/>
</dbReference>
<dbReference type="PROSITE" id="PS00906">
    <property type="entry name" value="UROD_1"/>
    <property type="match status" value="1"/>
</dbReference>
<dbReference type="PROSITE" id="PS00907">
    <property type="entry name" value="UROD_2"/>
    <property type="match status" value="1"/>
</dbReference>
<name>DCUP_LISIN</name>